<comment type="catalytic activity">
    <reaction evidence="1">
        <text>tRNA(Leu) + L-leucine + ATP = L-leucyl-tRNA(Leu) + AMP + diphosphate</text>
        <dbReference type="Rhea" id="RHEA:11688"/>
        <dbReference type="Rhea" id="RHEA-COMP:9613"/>
        <dbReference type="Rhea" id="RHEA-COMP:9622"/>
        <dbReference type="ChEBI" id="CHEBI:30616"/>
        <dbReference type="ChEBI" id="CHEBI:33019"/>
        <dbReference type="ChEBI" id="CHEBI:57427"/>
        <dbReference type="ChEBI" id="CHEBI:78442"/>
        <dbReference type="ChEBI" id="CHEBI:78494"/>
        <dbReference type="ChEBI" id="CHEBI:456215"/>
        <dbReference type="EC" id="6.1.1.4"/>
    </reaction>
</comment>
<comment type="subcellular location">
    <subcellularLocation>
        <location evidence="1">Cytoplasm</location>
    </subcellularLocation>
</comment>
<comment type="similarity">
    <text evidence="1">Belongs to the class-I aminoacyl-tRNA synthetase family.</text>
</comment>
<reference key="1">
    <citation type="submission" date="2007-12" db="EMBL/GenBank/DDBJ databases">
        <title>Brucella suis ATCC 23445 whole genome shotgun sequencing project.</title>
        <authorList>
            <person name="Setubal J.C."/>
            <person name="Bowns C."/>
            <person name="Boyle S."/>
            <person name="Crasta O.R."/>
            <person name="Czar M.J."/>
            <person name="Dharmanolla C."/>
            <person name="Gillespie J.J."/>
            <person name="Kenyon R.W."/>
            <person name="Lu J."/>
            <person name="Mane S."/>
            <person name="Mohapatra S."/>
            <person name="Nagrani S."/>
            <person name="Purkayastha A."/>
            <person name="Rajasimha H.K."/>
            <person name="Shallom J.M."/>
            <person name="Shallom S."/>
            <person name="Shukla M."/>
            <person name="Snyder E.E."/>
            <person name="Sobral B.W."/>
            <person name="Wattam A.R."/>
            <person name="Will R."/>
            <person name="Williams K."/>
            <person name="Yoo H."/>
            <person name="Bruce D."/>
            <person name="Detter C."/>
            <person name="Munk C."/>
            <person name="Brettin T.S."/>
        </authorList>
    </citation>
    <scope>NUCLEOTIDE SEQUENCE [LARGE SCALE GENOMIC DNA]</scope>
    <source>
        <strain>ATCC 23445 / NCTC 10510</strain>
    </source>
</reference>
<proteinExistence type="inferred from homology"/>
<organism>
    <name type="scientific">Brucella suis (strain ATCC 23445 / NCTC 10510)</name>
    <dbReference type="NCBI Taxonomy" id="470137"/>
    <lineage>
        <taxon>Bacteria</taxon>
        <taxon>Pseudomonadati</taxon>
        <taxon>Pseudomonadota</taxon>
        <taxon>Alphaproteobacteria</taxon>
        <taxon>Hyphomicrobiales</taxon>
        <taxon>Brucellaceae</taxon>
        <taxon>Brucella/Ochrobactrum group</taxon>
        <taxon>Brucella</taxon>
    </lineage>
</organism>
<dbReference type="EC" id="6.1.1.4" evidence="1"/>
<dbReference type="EMBL" id="CP000912">
    <property type="protein sequence ID" value="ABY40217.1"/>
    <property type="molecule type" value="Genomic_DNA"/>
</dbReference>
<dbReference type="RefSeq" id="WP_002967933.1">
    <property type="nucleotide sequence ID" value="NC_010167.1"/>
</dbReference>
<dbReference type="SMR" id="A9WWT1"/>
<dbReference type="GeneID" id="97533068"/>
<dbReference type="KEGG" id="bmt:BSUIS_B1284"/>
<dbReference type="HOGENOM" id="CLU_004427_0_0_5"/>
<dbReference type="Proteomes" id="UP000008545">
    <property type="component" value="Chromosome II"/>
</dbReference>
<dbReference type="GO" id="GO:0005829">
    <property type="term" value="C:cytosol"/>
    <property type="evidence" value="ECO:0007669"/>
    <property type="project" value="TreeGrafter"/>
</dbReference>
<dbReference type="GO" id="GO:0002161">
    <property type="term" value="F:aminoacyl-tRNA deacylase activity"/>
    <property type="evidence" value="ECO:0007669"/>
    <property type="project" value="InterPro"/>
</dbReference>
<dbReference type="GO" id="GO:0005524">
    <property type="term" value="F:ATP binding"/>
    <property type="evidence" value="ECO:0007669"/>
    <property type="project" value="UniProtKB-UniRule"/>
</dbReference>
<dbReference type="GO" id="GO:0004823">
    <property type="term" value="F:leucine-tRNA ligase activity"/>
    <property type="evidence" value="ECO:0007669"/>
    <property type="project" value="UniProtKB-UniRule"/>
</dbReference>
<dbReference type="GO" id="GO:0006429">
    <property type="term" value="P:leucyl-tRNA aminoacylation"/>
    <property type="evidence" value="ECO:0007669"/>
    <property type="project" value="UniProtKB-UniRule"/>
</dbReference>
<dbReference type="CDD" id="cd07958">
    <property type="entry name" value="Anticodon_Ia_Leu_BEm"/>
    <property type="match status" value="1"/>
</dbReference>
<dbReference type="CDD" id="cd00812">
    <property type="entry name" value="LeuRS_core"/>
    <property type="match status" value="1"/>
</dbReference>
<dbReference type="FunFam" id="1.10.730.10:FF:000002">
    <property type="entry name" value="Leucine--tRNA ligase"/>
    <property type="match status" value="1"/>
</dbReference>
<dbReference type="FunFam" id="3.40.50.620:FF:000003">
    <property type="entry name" value="Leucine--tRNA ligase"/>
    <property type="match status" value="1"/>
</dbReference>
<dbReference type="Gene3D" id="2.20.28.290">
    <property type="match status" value="1"/>
</dbReference>
<dbReference type="Gene3D" id="3.10.20.590">
    <property type="match status" value="1"/>
</dbReference>
<dbReference type="Gene3D" id="3.40.50.620">
    <property type="entry name" value="HUPs"/>
    <property type="match status" value="2"/>
</dbReference>
<dbReference type="Gene3D" id="1.10.730.10">
    <property type="entry name" value="Isoleucyl-tRNA Synthetase, Domain 1"/>
    <property type="match status" value="1"/>
</dbReference>
<dbReference type="Gene3D" id="3.90.740.10">
    <property type="entry name" value="Valyl/Leucyl/Isoleucyl-tRNA synthetase, editing domain"/>
    <property type="match status" value="1"/>
</dbReference>
<dbReference type="HAMAP" id="MF_00049_B">
    <property type="entry name" value="Leu_tRNA_synth_B"/>
    <property type="match status" value="1"/>
</dbReference>
<dbReference type="InterPro" id="IPR001412">
    <property type="entry name" value="aa-tRNA-synth_I_CS"/>
</dbReference>
<dbReference type="InterPro" id="IPR002300">
    <property type="entry name" value="aa-tRNA-synth_Ia"/>
</dbReference>
<dbReference type="InterPro" id="IPR002302">
    <property type="entry name" value="Leu-tRNA-ligase"/>
</dbReference>
<dbReference type="InterPro" id="IPR025709">
    <property type="entry name" value="Leu_tRNA-synth_edit"/>
</dbReference>
<dbReference type="InterPro" id="IPR013155">
    <property type="entry name" value="M/V/L/I-tRNA-synth_anticd-bd"/>
</dbReference>
<dbReference type="InterPro" id="IPR015413">
    <property type="entry name" value="Methionyl/Leucyl_tRNA_Synth"/>
</dbReference>
<dbReference type="InterPro" id="IPR014729">
    <property type="entry name" value="Rossmann-like_a/b/a_fold"/>
</dbReference>
<dbReference type="InterPro" id="IPR009080">
    <property type="entry name" value="tRNAsynth_Ia_anticodon-bd"/>
</dbReference>
<dbReference type="InterPro" id="IPR009008">
    <property type="entry name" value="Val/Leu/Ile-tRNA-synth_edit"/>
</dbReference>
<dbReference type="NCBIfam" id="TIGR00396">
    <property type="entry name" value="leuS_bact"/>
    <property type="match status" value="1"/>
</dbReference>
<dbReference type="PANTHER" id="PTHR43740:SF2">
    <property type="entry name" value="LEUCINE--TRNA LIGASE, MITOCHONDRIAL"/>
    <property type="match status" value="1"/>
</dbReference>
<dbReference type="PANTHER" id="PTHR43740">
    <property type="entry name" value="LEUCYL-TRNA SYNTHETASE"/>
    <property type="match status" value="1"/>
</dbReference>
<dbReference type="Pfam" id="PF08264">
    <property type="entry name" value="Anticodon_1"/>
    <property type="match status" value="1"/>
</dbReference>
<dbReference type="Pfam" id="PF00133">
    <property type="entry name" value="tRNA-synt_1"/>
    <property type="match status" value="2"/>
</dbReference>
<dbReference type="Pfam" id="PF13603">
    <property type="entry name" value="tRNA-synt_1_2"/>
    <property type="match status" value="1"/>
</dbReference>
<dbReference type="Pfam" id="PF09334">
    <property type="entry name" value="tRNA-synt_1g"/>
    <property type="match status" value="1"/>
</dbReference>
<dbReference type="PRINTS" id="PR00985">
    <property type="entry name" value="TRNASYNTHLEU"/>
</dbReference>
<dbReference type="SUPFAM" id="SSF47323">
    <property type="entry name" value="Anticodon-binding domain of a subclass of class I aminoacyl-tRNA synthetases"/>
    <property type="match status" value="1"/>
</dbReference>
<dbReference type="SUPFAM" id="SSF52374">
    <property type="entry name" value="Nucleotidylyl transferase"/>
    <property type="match status" value="1"/>
</dbReference>
<dbReference type="SUPFAM" id="SSF50677">
    <property type="entry name" value="ValRS/IleRS/LeuRS editing domain"/>
    <property type="match status" value="1"/>
</dbReference>
<dbReference type="PROSITE" id="PS00178">
    <property type="entry name" value="AA_TRNA_LIGASE_I"/>
    <property type="match status" value="1"/>
</dbReference>
<gene>
    <name evidence="1" type="primary">leuS</name>
    <name type="ordered locus">BSUIS_B1284</name>
</gene>
<feature type="chain" id="PRO_1000074826" description="Leucine--tRNA ligase">
    <location>
        <begin position="1"/>
        <end position="877"/>
    </location>
</feature>
<feature type="short sequence motif" description="'HIGH' region">
    <location>
        <begin position="43"/>
        <end position="53"/>
    </location>
</feature>
<feature type="short sequence motif" description="'KMSKS' region">
    <location>
        <begin position="628"/>
        <end position="632"/>
    </location>
</feature>
<feature type="binding site" evidence="1">
    <location>
        <position position="631"/>
    </location>
    <ligand>
        <name>ATP</name>
        <dbReference type="ChEBI" id="CHEBI:30616"/>
    </ligand>
</feature>
<keyword id="KW-0030">Aminoacyl-tRNA synthetase</keyword>
<keyword id="KW-0067">ATP-binding</keyword>
<keyword id="KW-0963">Cytoplasm</keyword>
<keyword id="KW-0436">Ligase</keyword>
<keyword id="KW-0547">Nucleotide-binding</keyword>
<keyword id="KW-0648">Protein biosynthesis</keyword>
<name>SYL_BRUSI</name>
<accession>A9WWT1</accession>
<protein>
    <recommendedName>
        <fullName evidence="1">Leucine--tRNA ligase</fullName>
        <ecNumber evidence="1">6.1.1.4</ecNumber>
    </recommendedName>
    <alternativeName>
        <fullName evidence="1">Leucyl-tRNA synthetase</fullName>
        <shortName evidence="1">LeuRS</shortName>
    </alternativeName>
</protein>
<evidence type="ECO:0000255" key="1">
    <source>
        <dbReference type="HAMAP-Rule" id="MF_00049"/>
    </source>
</evidence>
<sequence>MAAERYNPRVAEAHWQKVWEENRTFETDNSDSREKYYVLEMFPYPSGRIHMGHVRNYAMGDVVARYKRAKGFNVLHPMGWDAFGMPAENAAMQNKVHPKEWTYQNIATMKRQLKSMGLSLDWSREFATCDVEYYHRQQMLFIDLYEKGLVTRKTSKVNWDPVDNTVLANEQVVDGRGWRSGALVEQRELTQWFFKITDFSEELLAGLDTLDQWPEKVRLMQRNWIGKSEGLQVRFALAAGTAPAGFSEVEVYTTRPDTLFGAAFVAISADHPLAKKLSEGNAALSSFIEECHQQGTSLAALETAEKKGFDTGIKVKHPFDDNWELPVYVANFVLMEYGTGAVFGCPAHDQRDLDFANKYKLKVTPVVLPKGEDAASFSIGETAYTDDGVMINSRFLDGMTPEAAFNEVASRLEKTDLVGRPQAVRKVQFRLRDWGISRQRYWGCPIPMIHCESCGVNPVPRADLPVKLPDDVEFDRPGNPLDRHATWRHVKCPKCGGDARRETDTMDTFVDSSWYYTRFTAPWENEPTDRKAADHWLPVDQYIGGIEHAILHLLYSRFFTRAMKVAGHVGVDEPFKGLFTQGMVVHETYKANGQWVSPADIRIEEIDGKRVATMLDSGAPVEIGSIEKMSKSKKNVVDPDDIIASYGADTARWFVLSDSPPERDVIWTEAGAEGAHRFVQRIWRLVAEAAPALKDVAPKAGTQGEALGVSKAAHKAVKAVGDDIEKLAFNRGVARLYELVNTLSGALQQAADGKADAEMKGALREATEMLVLMTAPMMPHLAEQCLAELGGKVAGKETLVARAPWPVFDPALVVENEIVLPVQINGKKRGDLTIARDADQASIQQAVLELDFVKAALNGGSPKKIIVVPQRIVNVVA</sequence>